<comment type="catalytic activity">
    <reaction evidence="1">
        <text>L-arginine + H2O = L-citrulline + NH4(+)</text>
        <dbReference type="Rhea" id="RHEA:19597"/>
        <dbReference type="ChEBI" id="CHEBI:15377"/>
        <dbReference type="ChEBI" id="CHEBI:28938"/>
        <dbReference type="ChEBI" id="CHEBI:32682"/>
        <dbReference type="ChEBI" id="CHEBI:57743"/>
        <dbReference type="EC" id="3.5.3.6"/>
    </reaction>
</comment>
<comment type="pathway">
    <text evidence="1">Amino-acid degradation; L-arginine degradation via ADI pathway; carbamoyl phosphate from L-arginine: step 1/2.</text>
</comment>
<comment type="subcellular location">
    <subcellularLocation>
        <location evidence="1">Cytoplasm</location>
    </subcellularLocation>
</comment>
<comment type="similarity">
    <text evidence="1">Belongs to the arginine deiminase family.</text>
</comment>
<name>ARCA_LISMC</name>
<dbReference type="EC" id="3.5.3.6" evidence="1"/>
<dbReference type="EMBL" id="FM242711">
    <property type="protein sequence ID" value="CAS03842.1"/>
    <property type="molecule type" value="Genomic_DNA"/>
</dbReference>
<dbReference type="RefSeq" id="WP_003743334.1">
    <property type="nucleotide sequence ID" value="NC_012488.1"/>
</dbReference>
<dbReference type="SMR" id="C1KV84"/>
<dbReference type="KEGG" id="lmc:Lm4b_00052"/>
<dbReference type="HOGENOM" id="CLU_052662_0_1_9"/>
<dbReference type="UniPathway" id="UPA00254">
    <property type="reaction ID" value="UER00364"/>
</dbReference>
<dbReference type="GO" id="GO:0005737">
    <property type="term" value="C:cytoplasm"/>
    <property type="evidence" value="ECO:0007669"/>
    <property type="project" value="UniProtKB-SubCell"/>
</dbReference>
<dbReference type="GO" id="GO:0016990">
    <property type="term" value="F:arginine deiminase activity"/>
    <property type="evidence" value="ECO:0007669"/>
    <property type="project" value="UniProtKB-UniRule"/>
</dbReference>
<dbReference type="GO" id="GO:0019547">
    <property type="term" value="P:arginine catabolic process to ornithine"/>
    <property type="evidence" value="ECO:0007669"/>
    <property type="project" value="UniProtKB-UniRule"/>
</dbReference>
<dbReference type="GO" id="GO:0019546">
    <property type="term" value="P:arginine deiminase pathway"/>
    <property type="evidence" value="ECO:0007669"/>
    <property type="project" value="TreeGrafter"/>
</dbReference>
<dbReference type="Gene3D" id="1.10.3930.10">
    <property type="entry name" value="Arginine deiminase"/>
    <property type="match status" value="1"/>
</dbReference>
<dbReference type="Gene3D" id="3.75.10.10">
    <property type="entry name" value="L-arginine/glycine Amidinotransferase, Chain A"/>
    <property type="match status" value="1"/>
</dbReference>
<dbReference type="HAMAP" id="MF_00242">
    <property type="entry name" value="Arg_deiminase"/>
    <property type="match status" value="1"/>
</dbReference>
<dbReference type="InterPro" id="IPR003876">
    <property type="entry name" value="Arg_deiminase"/>
</dbReference>
<dbReference type="NCBIfam" id="TIGR01078">
    <property type="entry name" value="arcA"/>
    <property type="match status" value="1"/>
</dbReference>
<dbReference type="NCBIfam" id="NF002381">
    <property type="entry name" value="PRK01388.1"/>
    <property type="match status" value="1"/>
</dbReference>
<dbReference type="PANTHER" id="PTHR47271">
    <property type="entry name" value="ARGININE DEIMINASE"/>
    <property type="match status" value="1"/>
</dbReference>
<dbReference type="PANTHER" id="PTHR47271:SF2">
    <property type="entry name" value="ARGININE DEIMINASE"/>
    <property type="match status" value="1"/>
</dbReference>
<dbReference type="Pfam" id="PF02274">
    <property type="entry name" value="ADI"/>
    <property type="match status" value="1"/>
</dbReference>
<dbReference type="PIRSF" id="PIRSF006356">
    <property type="entry name" value="Arg_deiminase"/>
    <property type="match status" value="1"/>
</dbReference>
<dbReference type="PRINTS" id="PR01466">
    <property type="entry name" value="ARGDEIMINASE"/>
</dbReference>
<dbReference type="SUPFAM" id="SSF55909">
    <property type="entry name" value="Pentein"/>
    <property type="match status" value="1"/>
</dbReference>
<organism>
    <name type="scientific">Listeria monocytogenes serotype 4b (strain CLIP80459)</name>
    <dbReference type="NCBI Taxonomy" id="568819"/>
    <lineage>
        <taxon>Bacteria</taxon>
        <taxon>Bacillati</taxon>
        <taxon>Bacillota</taxon>
        <taxon>Bacilli</taxon>
        <taxon>Bacillales</taxon>
        <taxon>Listeriaceae</taxon>
        <taxon>Listeria</taxon>
    </lineage>
</organism>
<accession>C1KV84</accession>
<evidence type="ECO:0000255" key="1">
    <source>
        <dbReference type="HAMAP-Rule" id="MF_00242"/>
    </source>
</evidence>
<feature type="chain" id="PRO_1000204476" description="Arginine deiminase">
    <location>
        <begin position="1"/>
        <end position="410"/>
    </location>
</feature>
<feature type="active site" description="Amidino-cysteine intermediate" evidence="1">
    <location>
        <position position="399"/>
    </location>
</feature>
<reference key="1">
    <citation type="journal article" date="2012" name="BMC Genomics">
        <title>Comparative genomics and transcriptomics of lineages I, II, and III strains of Listeria monocytogenes.</title>
        <authorList>
            <person name="Hain T."/>
            <person name="Ghai R."/>
            <person name="Billion A."/>
            <person name="Kuenne C.T."/>
            <person name="Steinweg C."/>
            <person name="Izar B."/>
            <person name="Mohamed W."/>
            <person name="Mraheil M."/>
            <person name="Domann E."/>
            <person name="Schaffrath S."/>
            <person name="Karst U."/>
            <person name="Goesmann A."/>
            <person name="Oehm S."/>
            <person name="Puhler A."/>
            <person name="Merkl R."/>
            <person name="Vorwerk S."/>
            <person name="Glaser P."/>
            <person name="Garrido P."/>
            <person name="Rusniok C."/>
            <person name="Buchrieser C."/>
            <person name="Goebel W."/>
            <person name="Chakraborty T."/>
        </authorList>
    </citation>
    <scope>NUCLEOTIDE SEQUENCE [LARGE SCALE GENOMIC DNA]</scope>
    <source>
        <strain>CLIP80459</strain>
    </source>
</reference>
<keyword id="KW-0056">Arginine metabolism</keyword>
<keyword id="KW-0963">Cytoplasm</keyword>
<keyword id="KW-0378">Hydrolase</keyword>
<proteinExistence type="inferred from homology"/>
<sequence>MKMEQALNITSEIGKLQTVLVKRPGSELENITPEYLESLLFDDIPYLKMMQKEHDFFAKTMKDSNIEVLYLEKLAAEALREANNKESFLTKMIKESNQMDESALYVRDYLMSFDEEEMIRKLMSGLKKSEIPERKKKHLNEMMDEQYPFFLDPLPNLYFTRDPAAVIGNGVTINRMFQPARRRESMFIELILKHHPRFSNQEIPVWSGRGEPFSLEGGDELVLNEETVLVGVSERTDARAVERLAESLFSRSPKIKRVLAVEIPETRSFMHLDTVFTMVNFAQFTIHPAIQNQQGELNIYILEKSENGLEITPRRDFQRVIAEVLDEPEIDFIPCGGEDVIVSAREQWNDGANTLAIAPGEVITYDRNQVSNDLLRSAGIKVHEVISSELSRGRGGPRCMTMPLVRENLK</sequence>
<gene>
    <name evidence="1" type="primary">arcA</name>
    <name type="ordered locus">Lm4b_00052</name>
</gene>
<protein>
    <recommendedName>
        <fullName evidence="1">Arginine deiminase</fullName>
        <shortName evidence="1">ADI</shortName>
        <ecNumber evidence="1">3.5.3.6</ecNumber>
    </recommendedName>
    <alternativeName>
        <fullName evidence="1">Arginine dihydrolase</fullName>
        <shortName evidence="1">AD</shortName>
    </alternativeName>
</protein>